<proteinExistence type="inferred from homology"/>
<keyword id="KW-0521">NADP</keyword>
<keyword id="KW-0560">Oxidoreductase</keyword>
<keyword id="KW-0627">Porphyrin biosynthesis</keyword>
<keyword id="KW-1185">Reference proteome</keyword>
<feature type="chain" id="PRO_0000335061" description="Glutamyl-tRNA reductase">
    <location>
        <begin position="1"/>
        <end position="434"/>
    </location>
</feature>
<feature type="active site" description="Nucleophile" evidence="1">
    <location>
        <position position="53"/>
    </location>
</feature>
<feature type="binding site" evidence="1">
    <location>
        <begin position="52"/>
        <end position="55"/>
    </location>
    <ligand>
        <name>substrate</name>
    </ligand>
</feature>
<feature type="binding site" evidence="1">
    <location>
        <position position="115"/>
    </location>
    <ligand>
        <name>substrate</name>
    </ligand>
</feature>
<feature type="binding site" evidence="1">
    <location>
        <begin position="120"/>
        <end position="122"/>
    </location>
    <ligand>
        <name>substrate</name>
    </ligand>
</feature>
<feature type="binding site" evidence="1">
    <location>
        <position position="126"/>
    </location>
    <ligand>
        <name>substrate</name>
    </ligand>
</feature>
<feature type="binding site" evidence="1">
    <location>
        <begin position="195"/>
        <end position="200"/>
    </location>
    <ligand>
        <name>NADP(+)</name>
        <dbReference type="ChEBI" id="CHEBI:58349"/>
    </ligand>
</feature>
<feature type="site" description="Important for activity" evidence="1">
    <location>
        <position position="105"/>
    </location>
</feature>
<gene>
    <name evidence="1" type="primary">hemA</name>
    <name type="ordered locus">H16_A3339</name>
</gene>
<dbReference type="EC" id="1.2.1.70" evidence="1"/>
<dbReference type="EMBL" id="AM260479">
    <property type="protein sequence ID" value="CAJ94408.1"/>
    <property type="molecule type" value="Genomic_DNA"/>
</dbReference>
<dbReference type="RefSeq" id="WP_010809882.1">
    <property type="nucleotide sequence ID" value="NZ_CP039287.1"/>
</dbReference>
<dbReference type="SMR" id="Q0K6G3"/>
<dbReference type="STRING" id="381666.H16_A3339"/>
<dbReference type="KEGG" id="reh:H16_A3339"/>
<dbReference type="eggNOG" id="COG0373">
    <property type="taxonomic scope" value="Bacteria"/>
</dbReference>
<dbReference type="HOGENOM" id="CLU_035113_2_2_4"/>
<dbReference type="OrthoDB" id="110209at2"/>
<dbReference type="UniPathway" id="UPA00251">
    <property type="reaction ID" value="UER00316"/>
</dbReference>
<dbReference type="Proteomes" id="UP000008210">
    <property type="component" value="Chromosome 1"/>
</dbReference>
<dbReference type="GO" id="GO:0008883">
    <property type="term" value="F:glutamyl-tRNA reductase activity"/>
    <property type="evidence" value="ECO:0007669"/>
    <property type="project" value="UniProtKB-UniRule"/>
</dbReference>
<dbReference type="GO" id="GO:0050661">
    <property type="term" value="F:NADP binding"/>
    <property type="evidence" value="ECO:0007669"/>
    <property type="project" value="InterPro"/>
</dbReference>
<dbReference type="GO" id="GO:0019353">
    <property type="term" value="P:protoporphyrinogen IX biosynthetic process from glutamate"/>
    <property type="evidence" value="ECO:0007669"/>
    <property type="project" value="TreeGrafter"/>
</dbReference>
<dbReference type="CDD" id="cd05213">
    <property type="entry name" value="NAD_bind_Glutamyl_tRNA_reduct"/>
    <property type="match status" value="1"/>
</dbReference>
<dbReference type="FunFam" id="3.30.460.30:FF:000001">
    <property type="entry name" value="Glutamyl-tRNA reductase"/>
    <property type="match status" value="1"/>
</dbReference>
<dbReference type="FunFam" id="3.40.50.720:FF:000031">
    <property type="entry name" value="Glutamyl-tRNA reductase"/>
    <property type="match status" value="1"/>
</dbReference>
<dbReference type="Gene3D" id="3.30.460.30">
    <property type="entry name" value="Glutamyl-tRNA reductase, N-terminal domain"/>
    <property type="match status" value="1"/>
</dbReference>
<dbReference type="Gene3D" id="3.40.50.720">
    <property type="entry name" value="NAD(P)-binding Rossmann-like Domain"/>
    <property type="match status" value="1"/>
</dbReference>
<dbReference type="HAMAP" id="MF_00087">
    <property type="entry name" value="Glu_tRNA_reductase"/>
    <property type="match status" value="1"/>
</dbReference>
<dbReference type="InterPro" id="IPR000343">
    <property type="entry name" value="4pyrrol_synth_GluRdtase"/>
</dbReference>
<dbReference type="InterPro" id="IPR015896">
    <property type="entry name" value="4pyrrol_synth_GluRdtase_dimer"/>
</dbReference>
<dbReference type="InterPro" id="IPR015895">
    <property type="entry name" value="4pyrrol_synth_GluRdtase_N"/>
</dbReference>
<dbReference type="InterPro" id="IPR018214">
    <property type="entry name" value="GluRdtase_CS"/>
</dbReference>
<dbReference type="InterPro" id="IPR036453">
    <property type="entry name" value="GluRdtase_dimer_dom_sf"/>
</dbReference>
<dbReference type="InterPro" id="IPR036343">
    <property type="entry name" value="GluRdtase_N_sf"/>
</dbReference>
<dbReference type="InterPro" id="IPR036291">
    <property type="entry name" value="NAD(P)-bd_dom_sf"/>
</dbReference>
<dbReference type="InterPro" id="IPR006151">
    <property type="entry name" value="Shikm_DH/Glu-tRNA_Rdtase"/>
</dbReference>
<dbReference type="NCBIfam" id="TIGR01035">
    <property type="entry name" value="hemA"/>
    <property type="match status" value="1"/>
</dbReference>
<dbReference type="PANTHER" id="PTHR43013">
    <property type="entry name" value="GLUTAMYL-TRNA REDUCTASE"/>
    <property type="match status" value="1"/>
</dbReference>
<dbReference type="PANTHER" id="PTHR43013:SF1">
    <property type="entry name" value="GLUTAMYL-TRNA REDUCTASE"/>
    <property type="match status" value="1"/>
</dbReference>
<dbReference type="Pfam" id="PF00745">
    <property type="entry name" value="GlutR_dimer"/>
    <property type="match status" value="1"/>
</dbReference>
<dbReference type="Pfam" id="PF05201">
    <property type="entry name" value="GlutR_N"/>
    <property type="match status" value="1"/>
</dbReference>
<dbReference type="Pfam" id="PF01488">
    <property type="entry name" value="Shikimate_DH"/>
    <property type="match status" value="1"/>
</dbReference>
<dbReference type="PIRSF" id="PIRSF000445">
    <property type="entry name" value="4pyrrol_synth_GluRdtase"/>
    <property type="match status" value="1"/>
</dbReference>
<dbReference type="SUPFAM" id="SSF69742">
    <property type="entry name" value="Glutamyl tRNA-reductase catalytic, N-terminal domain"/>
    <property type="match status" value="1"/>
</dbReference>
<dbReference type="SUPFAM" id="SSF69075">
    <property type="entry name" value="Glutamyl tRNA-reductase dimerization domain"/>
    <property type="match status" value="1"/>
</dbReference>
<dbReference type="SUPFAM" id="SSF51735">
    <property type="entry name" value="NAD(P)-binding Rossmann-fold domains"/>
    <property type="match status" value="1"/>
</dbReference>
<dbReference type="PROSITE" id="PS00747">
    <property type="entry name" value="GLUTR"/>
    <property type="match status" value="1"/>
</dbReference>
<organism>
    <name type="scientific">Cupriavidus necator (strain ATCC 17699 / DSM 428 / KCTC 22496 / NCIMB 10442 / H16 / Stanier 337)</name>
    <name type="common">Ralstonia eutropha</name>
    <dbReference type="NCBI Taxonomy" id="381666"/>
    <lineage>
        <taxon>Bacteria</taxon>
        <taxon>Pseudomonadati</taxon>
        <taxon>Pseudomonadota</taxon>
        <taxon>Betaproteobacteria</taxon>
        <taxon>Burkholderiales</taxon>
        <taxon>Burkholderiaceae</taxon>
        <taxon>Cupriavidus</taxon>
    </lineage>
</organism>
<comment type="function">
    <text evidence="1">Catalyzes the NADPH-dependent reduction of glutamyl-tRNA(Glu) to glutamate 1-semialdehyde (GSA).</text>
</comment>
<comment type="catalytic activity">
    <reaction evidence="1">
        <text>(S)-4-amino-5-oxopentanoate + tRNA(Glu) + NADP(+) = L-glutamyl-tRNA(Glu) + NADPH + H(+)</text>
        <dbReference type="Rhea" id="RHEA:12344"/>
        <dbReference type="Rhea" id="RHEA-COMP:9663"/>
        <dbReference type="Rhea" id="RHEA-COMP:9680"/>
        <dbReference type="ChEBI" id="CHEBI:15378"/>
        <dbReference type="ChEBI" id="CHEBI:57501"/>
        <dbReference type="ChEBI" id="CHEBI:57783"/>
        <dbReference type="ChEBI" id="CHEBI:58349"/>
        <dbReference type="ChEBI" id="CHEBI:78442"/>
        <dbReference type="ChEBI" id="CHEBI:78520"/>
        <dbReference type="EC" id="1.2.1.70"/>
    </reaction>
</comment>
<comment type="pathway">
    <text evidence="1">Porphyrin-containing compound metabolism; protoporphyrin-IX biosynthesis; 5-aminolevulinate from L-glutamyl-tRNA(Glu): step 1/2.</text>
</comment>
<comment type="subunit">
    <text evidence="1">Homodimer.</text>
</comment>
<comment type="domain">
    <text evidence="1">Possesses an unusual extended V-shaped dimeric structure with each monomer consisting of three distinct domains arranged along a curved 'spinal' alpha-helix. The N-terminal catalytic domain specifically recognizes the glutamate moiety of the substrate. The second domain is the NADPH-binding domain, and the third C-terminal domain is responsible for dimerization.</text>
</comment>
<comment type="miscellaneous">
    <text evidence="1">During catalysis, the active site Cys acts as a nucleophile attacking the alpha-carbonyl group of tRNA-bound glutamate with the formation of a thioester intermediate between enzyme and glutamate, and the concomitant release of tRNA(Glu). The thioester intermediate is finally reduced by direct hydride transfer from NADPH, to form the product GSA.</text>
</comment>
<comment type="similarity">
    <text evidence="1">Belongs to the glutamyl-tRNA reductase family.</text>
</comment>
<name>HEM1_CUPNH</name>
<reference key="1">
    <citation type="journal article" date="2006" name="Nat. Biotechnol.">
        <title>Genome sequence of the bioplastic-producing 'Knallgas' bacterium Ralstonia eutropha H16.</title>
        <authorList>
            <person name="Pohlmann A."/>
            <person name="Fricke W.F."/>
            <person name="Reinecke F."/>
            <person name="Kusian B."/>
            <person name="Liesegang H."/>
            <person name="Cramm R."/>
            <person name="Eitinger T."/>
            <person name="Ewering C."/>
            <person name="Poetter M."/>
            <person name="Schwartz E."/>
            <person name="Strittmatter A."/>
            <person name="Voss I."/>
            <person name="Gottschalk G."/>
            <person name="Steinbuechel A."/>
            <person name="Friedrich B."/>
            <person name="Bowien B."/>
        </authorList>
    </citation>
    <scope>NUCLEOTIDE SEQUENCE [LARGE SCALE GENOMIC DNA]</scope>
    <source>
        <strain>ATCC 17699 / DSM 428 / KCTC 22496 / NCIMB 10442 / H16 / Stanier 337</strain>
    </source>
</reference>
<protein>
    <recommendedName>
        <fullName evidence="1">Glutamyl-tRNA reductase</fullName>
        <shortName evidence="1">GluTR</shortName>
        <ecNumber evidence="1">1.2.1.70</ecNumber>
    </recommendedName>
</protein>
<accession>Q0K6G3</accession>
<evidence type="ECO:0000255" key="1">
    <source>
        <dbReference type="HAMAP-Rule" id="MF_00087"/>
    </source>
</evidence>
<sequence>MQLLAIGINHTTAPVSLRERVAFPLEQIKPALGALRSHLSGRSGTEAAILSTCNRTEIYCATDVLTPGTDGFEHTLRWLSQHHNVPAGELAPHLYALPQSEAVRHAFRVASGLDSMVLGETQILGQLKDAVRTAGEAGSLGTYLNQLFQRTFAVAKEVRGQTEIGAHSVSMAAAAVRLAQRIFESVSTQRVLFIGAGEMIELCATHFAAQQPRQIVVANRTVERGEKLAEQLSGQGLTANAIRLTDLGERLHEFDIVVSCTASSLPIIGLGAVERAVKRRKHRPIMMVDLAVPRDVEPEVARLDDVFLYTVDDLGAIVREGNAMRQAAVAQAEAIIESRVQNFMHWLETRSVVPVIRELQTSGEAIRQAELERARRMLARGDDPEAVLEALSGALTRKFLHGPTHALNHTQGEDREALLRLVPGLFRHSSHSER</sequence>